<protein>
    <recommendedName>
        <fullName evidence="1">UPF0397 protein SAK_1648</fullName>
    </recommendedName>
</protein>
<sequence>MNTNTIKKVVATGIGAALFIIIGMLVNIPTPIPNTNIQLQYAVLALFAVIYGPGVGFFTGFIGHALKDSIQYGSPWWTWVLVSGLLGLMIGFFAKKLAIQLSGMTKKDLLLFNVVQVIANLIGWSVVAPYGDIFFYSEPASKVFAQGFLSSLVNSITIGVGGTLLLLAYAKSRPQKGSLSKD</sequence>
<gene>
    <name type="ordered locus">SAK_1648</name>
</gene>
<name>Y1648_STRA1</name>
<reference key="1">
    <citation type="journal article" date="2005" name="Proc. Natl. Acad. Sci. U.S.A.">
        <title>Genome analysis of multiple pathogenic isolates of Streptococcus agalactiae: implications for the microbial 'pan-genome'.</title>
        <authorList>
            <person name="Tettelin H."/>
            <person name="Masignani V."/>
            <person name="Cieslewicz M.J."/>
            <person name="Donati C."/>
            <person name="Medini D."/>
            <person name="Ward N.L."/>
            <person name="Angiuoli S.V."/>
            <person name="Crabtree J."/>
            <person name="Jones A.L."/>
            <person name="Durkin A.S."/>
            <person name="DeBoy R.T."/>
            <person name="Davidsen T.M."/>
            <person name="Mora M."/>
            <person name="Scarselli M."/>
            <person name="Margarit y Ros I."/>
            <person name="Peterson J.D."/>
            <person name="Hauser C.R."/>
            <person name="Sundaram J.P."/>
            <person name="Nelson W.C."/>
            <person name="Madupu R."/>
            <person name="Brinkac L.M."/>
            <person name="Dodson R.J."/>
            <person name="Rosovitz M.J."/>
            <person name="Sullivan S.A."/>
            <person name="Daugherty S.C."/>
            <person name="Haft D.H."/>
            <person name="Selengut J."/>
            <person name="Gwinn M.L."/>
            <person name="Zhou L."/>
            <person name="Zafar N."/>
            <person name="Khouri H."/>
            <person name="Radune D."/>
            <person name="Dimitrov G."/>
            <person name="Watkins K."/>
            <person name="O'Connor K.J."/>
            <person name="Smith S."/>
            <person name="Utterback T.R."/>
            <person name="White O."/>
            <person name="Rubens C.E."/>
            <person name="Grandi G."/>
            <person name="Madoff L.C."/>
            <person name="Kasper D.L."/>
            <person name="Telford J.L."/>
            <person name="Wessels M.R."/>
            <person name="Rappuoli R."/>
            <person name="Fraser C.M."/>
        </authorList>
    </citation>
    <scope>NUCLEOTIDE SEQUENCE [LARGE SCALE GENOMIC DNA]</scope>
    <source>
        <strain>ATCC 27591 / A909 / CDC SS700</strain>
    </source>
</reference>
<dbReference type="EMBL" id="CP000114">
    <property type="protein sequence ID" value="ABA45782.1"/>
    <property type="molecule type" value="Genomic_DNA"/>
</dbReference>
<dbReference type="RefSeq" id="WP_001095696.1">
    <property type="nucleotide sequence ID" value="NC_007432.1"/>
</dbReference>
<dbReference type="SMR" id="Q3JZQ2"/>
<dbReference type="KEGG" id="sak:SAK_1648"/>
<dbReference type="HOGENOM" id="CLU_120023_0_0_9"/>
<dbReference type="GO" id="GO:0005886">
    <property type="term" value="C:plasma membrane"/>
    <property type="evidence" value="ECO:0007669"/>
    <property type="project" value="UniProtKB-SubCell"/>
</dbReference>
<dbReference type="Gene3D" id="1.10.1760.20">
    <property type="match status" value="1"/>
</dbReference>
<dbReference type="HAMAP" id="MF_01572">
    <property type="entry name" value="UPF0397"/>
    <property type="match status" value="1"/>
</dbReference>
<dbReference type="InterPro" id="IPR009825">
    <property type="entry name" value="ECF_substrate-spec-like"/>
</dbReference>
<dbReference type="InterPro" id="IPR022914">
    <property type="entry name" value="UPF0397"/>
</dbReference>
<dbReference type="NCBIfam" id="NF010182">
    <property type="entry name" value="PRK13661.1"/>
    <property type="match status" value="1"/>
</dbReference>
<dbReference type="PANTHER" id="PTHR37815">
    <property type="entry name" value="UPF0397 PROTEIN BC_2624-RELATED"/>
    <property type="match status" value="1"/>
</dbReference>
<dbReference type="PANTHER" id="PTHR37815:SF3">
    <property type="entry name" value="UPF0397 PROTEIN SPR0429"/>
    <property type="match status" value="1"/>
</dbReference>
<dbReference type="Pfam" id="PF07155">
    <property type="entry name" value="ECF-ribofla_trS"/>
    <property type="match status" value="1"/>
</dbReference>
<comment type="subcellular location">
    <subcellularLocation>
        <location evidence="1">Cell membrane</location>
        <topology evidence="1">Multi-pass membrane protein</topology>
    </subcellularLocation>
</comment>
<comment type="similarity">
    <text evidence="1">Belongs to the UPF0397 family.</text>
</comment>
<keyword id="KW-1003">Cell membrane</keyword>
<keyword id="KW-0472">Membrane</keyword>
<keyword id="KW-0812">Transmembrane</keyword>
<keyword id="KW-1133">Transmembrane helix</keyword>
<organism>
    <name type="scientific">Streptococcus agalactiae serotype Ia (strain ATCC 27591 / A909 / CDC SS700)</name>
    <dbReference type="NCBI Taxonomy" id="205921"/>
    <lineage>
        <taxon>Bacteria</taxon>
        <taxon>Bacillati</taxon>
        <taxon>Bacillota</taxon>
        <taxon>Bacilli</taxon>
        <taxon>Lactobacillales</taxon>
        <taxon>Streptococcaceae</taxon>
        <taxon>Streptococcus</taxon>
    </lineage>
</organism>
<feature type="chain" id="PRO_0000260810" description="UPF0397 protein SAK_1648">
    <location>
        <begin position="1"/>
        <end position="182"/>
    </location>
</feature>
<feature type="transmembrane region" description="Helical" evidence="1">
    <location>
        <begin position="9"/>
        <end position="29"/>
    </location>
</feature>
<feature type="transmembrane region" description="Helical" evidence="1">
    <location>
        <begin position="42"/>
        <end position="62"/>
    </location>
</feature>
<feature type="transmembrane region" description="Helical" evidence="1">
    <location>
        <begin position="74"/>
        <end position="94"/>
    </location>
</feature>
<feature type="transmembrane region" description="Helical" evidence="1">
    <location>
        <begin position="109"/>
        <end position="129"/>
    </location>
</feature>
<feature type="transmembrane region" description="Helical" evidence="1">
    <location>
        <begin position="148"/>
        <end position="168"/>
    </location>
</feature>
<accession>Q3JZQ2</accession>
<evidence type="ECO:0000255" key="1">
    <source>
        <dbReference type="HAMAP-Rule" id="MF_01572"/>
    </source>
</evidence>
<proteinExistence type="inferred from homology"/>